<name>FRIH_PONAB</name>
<feature type="chain" id="PRO_0000424474" description="Ferritin heavy chain">
    <location>
        <begin position="1"/>
        <end position="183"/>
    </location>
</feature>
<feature type="initiator methionine" description="Removed; alternate" evidence="1">
    <location>
        <position position="1"/>
    </location>
</feature>
<feature type="chain" id="PRO_0000201050" description="Ferritin heavy chain, N-terminally processed">
    <location>
        <begin position="2"/>
        <end position="183"/>
    </location>
</feature>
<feature type="domain" description="Ferritin-like diiron" evidence="4">
    <location>
        <begin position="11"/>
        <end position="160"/>
    </location>
</feature>
<feature type="binding site" evidence="4">
    <location>
        <position position="28"/>
    </location>
    <ligand>
        <name>Fe cation</name>
        <dbReference type="ChEBI" id="CHEBI:24875"/>
        <label>1</label>
    </ligand>
</feature>
<feature type="binding site" evidence="4">
    <location>
        <position position="63"/>
    </location>
    <ligand>
        <name>Fe cation</name>
        <dbReference type="ChEBI" id="CHEBI:24875"/>
        <label>1</label>
    </ligand>
</feature>
<feature type="binding site" evidence="4">
    <location>
        <position position="63"/>
    </location>
    <ligand>
        <name>Fe cation</name>
        <dbReference type="ChEBI" id="CHEBI:24875"/>
        <label>2</label>
    </ligand>
</feature>
<feature type="binding site" evidence="4">
    <location>
        <position position="66"/>
    </location>
    <ligand>
        <name>Fe cation</name>
        <dbReference type="ChEBI" id="CHEBI:24875"/>
        <label>1</label>
    </ligand>
</feature>
<feature type="binding site" evidence="4">
    <location>
        <position position="108"/>
    </location>
    <ligand>
        <name>Fe cation</name>
        <dbReference type="ChEBI" id="CHEBI:24875"/>
        <label>2</label>
    </ligand>
</feature>
<feature type="binding site" evidence="4">
    <location>
        <position position="142"/>
    </location>
    <ligand>
        <name>Fe cation</name>
        <dbReference type="ChEBI" id="CHEBI:24875"/>
        <label>2</label>
    </ligand>
</feature>
<feature type="modified residue" description="N-acetylmethionine" evidence="1">
    <location>
        <position position="1"/>
    </location>
</feature>
<feature type="modified residue" description="N-acetylthreonine; in Ferritin heavy chain, N-terminally processed" evidence="1">
    <location>
        <position position="2"/>
    </location>
</feature>
<feature type="modified residue" description="Phosphoserine" evidence="1">
    <location>
        <position position="179"/>
    </location>
</feature>
<feature type="modified residue" description="Phosphoserine" evidence="1">
    <location>
        <position position="183"/>
    </location>
</feature>
<organism>
    <name type="scientific">Pongo abelii</name>
    <name type="common">Sumatran orangutan</name>
    <name type="synonym">Pongo pygmaeus abelii</name>
    <dbReference type="NCBI Taxonomy" id="9601"/>
    <lineage>
        <taxon>Eukaryota</taxon>
        <taxon>Metazoa</taxon>
        <taxon>Chordata</taxon>
        <taxon>Craniata</taxon>
        <taxon>Vertebrata</taxon>
        <taxon>Euteleostomi</taxon>
        <taxon>Mammalia</taxon>
        <taxon>Eutheria</taxon>
        <taxon>Euarchontoglires</taxon>
        <taxon>Primates</taxon>
        <taxon>Haplorrhini</taxon>
        <taxon>Catarrhini</taxon>
        <taxon>Hominidae</taxon>
        <taxon>Pongo</taxon>
    </lineage>
</organism>
<keyword id="KW-0007">Acetylation</keyword>
<keyword id="KW-0963">Cytoplasm</keyword>
<keyword id="KW-0968">Cytoplasmic vesicle</keyword>
<keyword id="KW-0408">Iron</keyword>
<keyword id="KW-0409">Iron storage</keyword>
<keyword id="KW-0458">Lysosome</keyword>
<keyword id="KW-0479">Metal-binding</keyword>
<keyword id="KW-0560">Oxidoreductase</keyword>
<keyword id="KW-0597">Phosphoprotein</keyword>
<keyword id="KW-1185">Reference proteome</keyword>
<comment type="function">
    <text evidence="1 2">Stores iron in a soluble, non-toxic, readily available form (By similarity). Important for iron homeostasis (By similarity). Has ferroxidase activity (By similarity). Iron is taken up in the ferrous form and deposited as ferric hydroxides after oxidation (By similarity). Also plays a role in delivery of iron to cells (By similarity). Mediates iron uptake in capsule cells of the developing kidney (By similarity). Delivery to lysosomes is mediated by the cargo receptor NCOA4 for autophagic degradation and release of iron (By similarity).</text>
</comment>
<comment type="catalytic activity">
    <reaction evidence="1">
        <text>4 Fe(2+) + O2 + 4 H(+) = 4 Fe(3+) + 2 H2O</text>
        <dbReference type="Rhea" id="RHEA:11148"/>
        <dbReference type="ChEBI" id="CHEBI:15377"/>
        <dbReference type="ChEBI" id="CHEBI:15378"/>
        <dbReference type="ChEBI" id="CHEBI:15379"/>
        <dbReference type="ChEBI" id="CHEBI:29033"/>
        <dbReference type="ChEBI" id="CHEBI:29034"/>
        <dbReference type="EC" id="1.16.3.1"/>
    </reaction>
</comment>
<comment type="subunit">
    <text evidence="1 2">Oligomer of 24 subunits. There are two types of subunits: L (light) chain and H (heavy) chain. The major chain can be light or heavy, depending on the species and tissue type. The functional molecule forms a roughly spherical shell with a diameter of 12 nm and contains a central cavity into which the insoluble mineral iron core is deposited. Interacts with NCOA4; NCOA4 promotes targeting of the iron-binding ferritin complex to autolysosomes following starvation or iron depletion (By similarity).</text>
</comment>
<comment type="subcellular location">
    <subcellularLocation>
        <location evidence="3">Cytoplasm</location>
    </subcellularLocation>
    <subcellularLocation>
        <location evidence="1">Lysosome</location>
    </subcellularLocation>
    <subcellularLocation>
        <location evidence="1">Cytoplasmic vesicle</location>
        <location evidence="1">Autophagosome</location>
    </subcellularLocation>
</comment>
<comment type="similarity">
    <text evidence="5">Belongs to the ferritin family.</text>
</comment>
<sequence length="183" mass="21226">MTTASTSQVRQNYHQDSEAAINRQINLELYASYVYLSMSYYFDRDDVALKNFAKYFLHQSHEEREHAEKLMKLQNQRGGRIFLQDIKKPDCDDWESGLNAMECALHLEKNVNQSLLELHKLATDKNDPHLCDFLETHYLNEQVKAIKELGDHVTNLRKMGAPESGLAEYLFDKHTLGDSDNES</sequence>
<reference key="1">
    <citation type="submission" date="2004-11" db="EMBL/GenBank/DDBJ databases">
        <authorList>
            <consortium name="The German cDNA consortium"/>
        </authorList>
    </citation>
    <scope>NUCLEOTIDE SEQUENCE [LARGE SCALE MRNA]</scope>
    <source>
        <tissue>Kidney</tissue>
    </source>
</reference>
<evidence type="ECO:0000250" key="1">
    <source>
        <dbReference type="UniProtKB" id="P02794"/>
    </source>
</evidence>
<evidence type="ECO:0000250" key="2">
    <source>
        <dbReference type="UniProtKB" id="P09528"/>
    </source>
</evidence>
<evidence type="ECO:0000250" key="3">
    <source>
        <dbReference type="UniProtKB" id="P19130"/>
    </source>
</evidence>
<evidence type="ECO:0000255" key="4">
    <source>
        <dbReference type="PROSITE-ProRule" id="PRU00085"/>
    </source>
</evidence>
<evidence type="ECO:0000305" key="5"/>
<gene>
    <name type="primary">FTH1</name>
    <name type="synonym">FTH</name>
</gene>
<proteinExistence type="evidence at transcript level"/>
<accession>Q5R8J7</accession>
<protein>
    <recommendedName>
        <fullName>Ferritin heavy chain</fullName>
        <shortName>Ferritin H subunit</shortName>
        <ecNumber evidence="1">1.16.3.1</ecNumber>
    </recommendedName>
    <component>
        <recommendedName>
            <fullName>Ferritin heavy chain, N-terminally processed</fullName>
        </recommendedName>
    </component>
</protein>
<dbReference type="EC" id="1.16.3.1" evidence="1"/>
<dbReference type="EMBL" id="CR859755">
    <property type="protein sequence ID" value="CAH91913.1"/>
    <property type="molecule type" value="mRNA"/>
</dbReference>
<dbReference type="RefSeq" id="NP_001126108.1">
    <property type="nucleotide sequence ID" value="NM_001132636.1"/>
</dbReference>
<dbReference type="SMR" id="Q5R8J7"/>
<dbReference type="FunCoup" id="Q5R8J7">
    <property type="interactions" value="172"/>
</dbReference>
<dbReference type="STRING" id="9601.ENSPPYP00000003663"/>
<dbReference type="Ensembl" id="ENSPPYT00000003794.3">
    <property type="protein sequence ID" value="ENSPPYP00000003663.2"/>
    <property type="gene ID" value="ENSPPYG00000003173.3"/>
</dbReference>
<dbReference type="GeneID" id="100173063"/>
<dbReference type="KEGG" id="pon:100173063"/>
<dbReference type="CTD" id="2495"/>
<dbReference type="eggNOG" id="KOG2332">
    <property type="taxonomic scope" value="Eukaryota"/>
</dbReference>
<dbReference type="GeneTree" id="ENSGT00950000182841"/>
<dbReference type="HOGENOM" id="CLU_065681_4_0_1"/>
<dbReference type="InParanoid" id="Q5R8J7"/>
<dbReference type="OMA" id="FFLKASM"/>
<dbReference type="OrthoDB" id="186462at2759"/>
<dbReference type="TreeFam" id="TF313885"/>
<dbReference type="Proteomes" id="UP000001595">
    <property type="component" value="Chromosome 11"/>
</dbReference>
<dbReference type="GO" id="GO:0005776">
    <property type="term" value="C:autophagosome"/>
    <property type="evidence" value="ECO:0007669"/>
    <property type="project" value="UniProtKB-SubCell"/>
</dbReference>
<dbReference type="GO" id="GO:0031410">
    <property type="term" value="C:cytoplasmic vesicle"/>
    <property type="evidence" value="ECO:0007669"/>
    <property type="project" value="UniProtKB-KW"/>
</dbReference>
<dbReference type="GO" id="GO:0005764">
    <property type="term" value="C:lysosome"/>
    <property type="evidence" value="ECO:0007669"/>
    <property type="project" value="UniProtKB-SubCell"/>
</dbReference>
<dbReference type="GO" id="GO:0008199">
    <property type="term" value="F:ferric iron binding"/>
    <property type="evidence" value="ECO:0007669"/>
    <property type="project" value="InterPro"/>
</dbReference>
<dbReference type="GO" id="GO:0008198">
    <property type="term" value="F:ferrous iron binding"/>
    <property type="evidence" value="ECO:0007669"/>
    <property type="project" value="TreeGrafter"/>
</dbReference>
<dbReference type="GO" id="GO:0004322">
    <property type="term" value="F:ferroxidase activity"/>
    <property type="evidence" value="ECO:0007669"/>
    <property type="project" value="UniProtKB-EC"/>
</dbReference>
<dbReference type="GO" id="GO:0006879">
    <property type="term" value="P:intracellular iron ion homeostasis"/>
    <property type="evidence" value="ECO:0007669"/>
    <property type="project" value="UniProtKB-KW"/>
</dbReference>
<dbReference type="GO" id="GO:0006826">
    <property type="term" value="P:iron ion transport"/>
    <property type="evidence" value="ECO:0007669"/>
    <property type="project" value="InterPro"/>
</dbReference>
<dbReference type="GO" id="GO:0110076">
    <property type="term" value="P:negative regulation of ferroptosis"/>
    <property type="evidence" value="ECO:0000250"/>
    <property type="project" value="UniProtKB"/>
</dbReference>
<dbReference type="CDD" id="cd01056">
    <property type="entry name" value="Euk_Ferritin"/>
    <property type="match status" value="1"/>
</dbReference>
<dbReference type="FunFam" id="1.20.1260.10:FF:000016">
    <property type="entry name" value="Ferritin heavy chain"/>
    <property type="match status" value="1"/>
</dbReference>
<dbReference type="Gene3D" id="1.20.1260.10">
    <property type="match status" value="1"/>
</dbReference>
<dbReference type="InterPro" id="IPR001519">
    <property type="entry name" value="Ferritin"/>
</dbReference>
<dbReference type="InterPro" id="IPR012347">
    <property type="entry name" value="Ferritin-like"/>
</dbReference>
<dbReference type="InterPro" id="IPR009040">
    <property type="entry name" value="Ferritin-like_diiron"/>
</dbReference>
<dbReference type="InterPro" id="IPR009078">
    <property type="entry name" value="Ferritin-like_SF"/>
</dbReference>
<dbReference type="InterPro" id="IPR014034">
    <property type="entry name" value="Ferritin_CS"/>
</dbReference>
<dbReference type="InterPro" id="IPR008331">
    <property type="entry name" value="Ferritin_DPS_dom"/>
</dbReference>
<dbReference type="PANTHER" id="PTHR11431">
    <property type="entry name" value="FERRITIN"/>
    <property type="match status" value="1"/>
</dbReference>
<dbReference type="PANTHER" id="PTHR11431:SF37">
    <property type="entry name" value="FERRITIN HEAVY CHAIN"/>
    <property type="match status" value="1"/>
</dbReference>
<dbReference type="Pfam" id="PF00210">
    <property type="entry name" value="Ferritin"/>
    <property type="match status" value="1"/>
</dbReference>
<dbReference type="SUPFAM" id="SSF47240">
    <property type="entry name" value="Ferritin-like"/>
    <property type="match status" value="1"/>
</dbReference>
<dbReference type="PROSITE" id="PS00540">
    <property type="entry name" value="FERRITIN_1"/>
    <property type="match status" value="1"/>
</dbReference>
<dbReference type="PROSITE" id="PS00204">
    <property type="entry name" value="FERRITIN_2"/>
    <property type="match status" value="1"/>
</dbReference>
<dbReference type="PROSITE" id="PS50905">
    <property type="entry name" value="FERRITIN_LIKE"/>
    <property type="match status" value="1"/>
</dbReference>